<feature type="chain" id="PRO_1000136491" description="Phosphoenolpyruvate synthase regulatory protein">
    <location>
        <begin position="1"/>
        <end position="277"/>
    </location>
</feature>
<feature type="binding site" evidence="1">
    <location>
        <begin position="157"/>
        <end position="164"/>
    </location>
    <ligand>
        <name>ADP</name>
        <dbReference type="ChEBI" id="CHEBI:456216"/>
    </ligand>
</feature>
<comment type="function">
    <text evidence="1">Bifunctional serine/threonine kinase and phosphorylase involved in the regulation of the phosphoenolpyruvate synthase (PEPS) by catalyzing its phosphorylation/dephosphorylation.</text>
</comment>
<comment type="catalytic activity">
    <reaction evidence="1">
        <text>[pyruvate, water dikinase] + ADP = [pyruvate, water dikinase]-phosphate + AMP + H(+)</text>
        <dbReference type="Rhea" id="RHEA:46020"/>
        <dbReference type="Rhea" id="RHEA-COMP:11425"/>
        <dbReference type="Rhea" id="RHEA-COMP:11426"/>
        <dbReference type="ChEBI" id="CHEBI:15378"/>
        <dbReference type="ChEBI" id="CHEBI:43176"/>
        <dbReference type="ChEBI" id="CHEBI:68546"/>
        <dbReference type="ChEBI" id="CHEBI:456215"/>
        <dbReference type="ChEBI" id="CHEBI:456216"/>
        <dbReference type="EC" id="2.7.11.33"/>
    </reaction>
</comment>
<comment type="catalytic activity">
    <reaction evidence="1">
        <text>[pyruvate, water dikinase]-phosphate + phosphate + H(+) = [pyruvate, water dikinase] + diphosphate</text>
        <dbReference type="Rhea" id="RHEA:48580"/>
        <dbReference type="Rhea" id="RHEA-COMP:11425"/>
        <dbReference type="Rhea" id="RHEA-COMP:11426"/>
        <dbReference type="ChEBI" id="CHEBI:15378"/>
        <dbReference type="ChEBI" id="CHEBI:33019"/>
        <dbReference type="ChEBI" id="CHEBI:43176"/>
        <dbReference type="ChEBI" id="CHEBI:43474"/>
        <dbReference type="ChEBI" id="CHEBI:68546"/>
        <dbReference type="EC" id="2.7.4.28"/>
    </reaction>
</comment>
<comment type="similarity">
    <text evidence="1">Belongs to the pyruvate, phosphate/water dikinase regulatory protein family. PSRP subfamily.</text>
</comment>
<organism>
    <name type="scientific">Salmonella gallinarum (strain 287/91 / NCTC 13346)</name>
    <dbReference type="NCBI Taxonomy" id="550538"/>
    <lineage>
        <taxon>Bacteria</taxon>
        <taxon>Pseudomonadati</taxon>
        <taxon>Pseudomonadota</taxon>
        <taxon>Gammaproteobacteria</taxon>
        <taxon>Enterobacterales</taxon>
        <taxon>Enterobacteriaceae</taxon>
        <taxon>Salmonella</taxon>
    </lineage>
</organism>
<gene>
    <name evidence="1" type="primary">ppsR</name>
    <name type="ordered locus">SG1768</name>
</gene>
<proteinExistence type="inferred from homology"/>
<protein>
    <recommendedName>
        <fullName evidence="1">Phosphoenolpyruvate synthase regulatory protein</fullName>
        <shortName evidence="1">PEP synthase regulatory protein</shortName>
        <shortName evidence="1">PSRP</shortName>
        <ecNumber evidence="1">2.7.11.33</ecNumber>
        <ecNumber evidence="1">2.7.4.28</ecNumber>
    </recommendedName>
    <alternativeName>
        <fullName evidence="1">Pyruvate, water dikinase regulatory protein</fullName>
    </alternativeName>
</protein>
<reference key="1">
    <citation type="journal article" date="2008" name="Genome Res.">
        <title>Comparative genome analysis of Salmonella enteritidis PT4 and Salmonella gallinarum 287/91 provides insights into evolutionary and host adaptation pathways.</title>
        <authorList>
            <person name="Thomson N.R."/>
            <person name="Clayton D.J."/>
            <person name="Windhorst D."/>
            <person name="Vernikos G."/>
            <person name="Davidson S."/>
            <person name="Churcher C."/>
            <person name="Quail M.A."/>
            <person name="Stevens M."/>
            <person name="Jones M.A."/>
            <person name="Watson M."/>
            <person name="Barron A."/>
            <person name="Layton A."/>
            <person name="Pickard D."/>
            <person name="Kingsley R.A."/>
            <person name="Bignell A."/>
            <person name="Clark L."/>
            <person name="Harris B."/>
            <person name="Ormond D."/>
            <person name="Abdellah Z."/>
            <person name="Brooks K."/>
            <person name="Cherevach I."/>
            <person name="Chillingworth T."/>
            <person name="Woodward J."/>
            <person name="Norberczak H."/>
            <person name="Lord A."/>
            <person name="Arrowsmith C."/>
            <person name="Jagels K."/>
            <person name="Moule S."/>
            <person name="Mungall K."/>
            <person name="Saunders M."/>
            <person name="Whitehead S."/>
            <person name="Chabalgoity J.A."/>
            <person name="Maskell D."/>
            <person name="Humphreys T."/>
            <person name="Roberts M."/>
            <person name="Barrow P.A."/>
            <person name="Dougan G."/>
            <person name="Parkhill J."/>
        </authorList>
    </citation>
    <scope>NUCLEOTIDE SEQUENCE [LARGE SCALE GENOMIC DNA]</scope>
    <source>
        <strain>287/91 / NCTC 13346</strain>
    </source>
</reference>
<keyword id="KW-0418">Kinase</keyword>
<keyword id="KW-0547">Nucleotide-binding</keyword>
<keyword id="KW-0723">Serine/threonine-protein kinase</keyword>
<keyword id="KW-0808">Transferase</keyword>
<evidence type="ECO:0000255" key="1">
    <source>
        <dbReference type="HAMAP-Rule" id="MF_01062"/>
    </source>
</evidence>
<sequence length="277" mass="31164">MDNVVDRHVFYISDGTAITAEVLGHAVMSQFPVTISSITLPFVENESRARAVKDQIDAIYQQTGVRPLVFYSIVLPEIRAIILQSEGFCQDIVQALVAPLQQEMKQDPTPIAHRTHGLNPGNLNKYDARIAAIDYTLAHDDGISLRNLDQAQVILLGVSRCGKTPTSLYLAMQFGIRAANYPFIADDMDNLTLPTSLKPLQHKLFGLTIDPERLAAIREERRENSRYASLRQCRMEVAEVEALYRKNQIPCLNSTNYSVEEIATKILDIMGLNRRMY</sequence>
<dbReference type="EC" id="2.7.11.33" evidence="1"/>
<dbReference type="EC" id="2.7.4.28" evidence="1"/>
<dbReference type="EMBL" id="AM933173">
    <property type="protein sequence ID" value="CAR37626.1"/>
    <property type="molecule type" value="Genomic_DNA"/>
</dbReference>
<dbReference type="RefSeq" id="WP_000370996.1">
    <property type="nucleotide sequence ID" value="NC_011274.1"/>
</dbReference>
<dbReference type="SMR" id="B5RAV8"/>
<dbReference type="KEGG" id="seg:SG1768"/>
<dbReference type="HOGENOM" id="CLU_046206_1_0_6"/>
<dbReference type="Proteomes" id="UP000008321">
    <property type="component" value="Chromosome"/>
</dbReference>
<dbReference type="GO" id="GO:0043531">
    <property type="term" value="F:ADP binding"/>
    <property type="evidence" value="ECO:0007669"/>
    <property type="project" value="UniProtKB-UniRule"/>
</dbReference>
<dbReference type="GO" id="GO:0005524">
    <property type="term" value="F:ATP binding"/>
    <property type="evidence" value="ECO:0007669"/>
    <property type="project" value="InterPro"/>
</dbReference>
<dbReference type="GO" id="GO:0016776">
    <property type="term" value="F:phosphotransferase activity, phosphate group as acceptor"/>
    <property type="evidence" value="ECO:0007669"/>
    <property type="project" value="UniProtKB-UniRule"/>
</dbReference>
<dbReference type="GO" id="GO:0004674">
    <property type="term" value="F:protein serine/threonine kinase activity"/>
    <property type="evidence" value="ECO:0007669"/>
    <property type="project" value="UniProtKB-UniRule"/>
</dbReference>
<dbReference type="HAMAP" id="MF_01062">
    <property type="entry name" value="PSRP"/>
    <property type="match status" value="1"/>
</dbReference>
<dbReference type="InterPro" id="IPR005177">
    <property type="entry name" value="Kinase-pyrophosphorylase"/>
</dbReference>
<dbReference type="InterPro" id="IPR026530">
    <property type="entry name" value="PSRP"/>
</dbReference>
<dbReference type="NCBIfam" id="NF003742">
    <property type="entry name" value="PRK05339.1"/>
    <property type="match status" value="1"/>
</dbReference>
<dbReference type="PANTHER" id="PTHR31756">
    <property type="entry name" value="PYRUVATE, PHOSPHATE DIKINASE REGULATORY PROTEIN 1, CHLOROPLASTIC"/>
    <property type="match status" value="1"/>
</dbReference>
<dbReference type="PANTHER" id="PTHR31756:SF3">
    <property type="entry name" value="PYRUVATE, PHOSPHATE DIKINASE REGULATORY PROTEIN 1, CHLOROPLASTIC"/>
    <property type="match status" value="1"/>
</dbReference>
<dbReference type="Pfam" id="PF03618">
    <property type="entry name" value="Kinase-PPPase"/>
    <property type="match status" value="1"/>
</dbReference>
<name>PSRP_SALG2</name>
<accession>B5RAV8</accession>